<organism>
    <name type="scientific">Coxiella burnetii (strain Dugway 5J108-111)</name>
    <dbReference type="NCBI Taxonomy" id="434922"/>
    <lineage>
        <taxon>Bacteria</taxon>
        <taxon>Pseudomonadati</taxon>
        <taxon>Pseudomonadota</taxon>
        <taxon>Gammaproteobacteria</taxon>
        <taxon>Legionellales</taxon>
        <taxon>Coxiellaceae</taxon>
        <taxon>Coxiella</taxon>
    </lineage>
</organism>
<keyword id="KW-0997">Cell inner membrane</keyword>
<keyword id="KW-1003">Cell membrane</keyword>
<keyword id="KW-0407">Ion channel</keyword>
<keyword id="KW-0406">Ion transport</keyword>
<keyword id="KW-0472">Membrane</keyword>
<keyword id="KW-0479">Metal-binding</keyword>
<keyword id="KW-0915">Sodium</keyword>
<keyword id="KW-0812">Transmembrane</keyword>
<keyword id="KW-1133">Transmembrane helix</keyword>
<keyword id="KW-0813">Transport</keyword>
<sequence length="124" mass="13334">MNVLLIFLGCGAGGVARYGVSNLMYLLMGKQFPIGTLIVNITGSLLMGILFIFILERLSGNIQLWRSLLLIGFLGGYTTFSSFSIETFNLIEAGHYFGAALNVLLSVALCIAGAWLGVLIGRQL</sequence>
<gene>
    <name evidence="1" type="primary">fluC</name>
    <name evidence="1" type="synonym">crcB</name>
    <name type="ordered locus">CBUD_1038</name>
</gene>
<name>FLUC_COXBN</name>
<reference key="1">
    <citation type="journal article" date="2009" name="Infect. Immun.">
        <title>Comparative genomics reveal extensive transposon-mediated genomic plasticity and diversity among potential effector proteins within the genus Coxiella.</title>
        <authorList>
            <person name="Beare P.A."/>
            <person name="Unsworth N."/>
            <person name="Andoh M."/>
            <person name="Voth D.E."/>
            <person name="Omsland A."/>
            <person name="Gilk S.D."/>
            <person name="Williams K.P."/>
            <person name="Sobral B.W."/>
            <person name="Kupko J.J. III"/>
            <person name="Porcella S.F."/>
            <person name="Samuel J.E."/>
            <person name="Heinzen R.A."/>
        </authorList>
    </citation>
    <scope>NUCLEOTIDE SEQUENCE [LARGE SCALE GENOMIC DNA]</scope>
    <source>
        <strain>Dugway 5J108-111</strain>
    </source>
</reference>
<accession>A9KG69</accession>
<dbReference type="EMBL" id="CP000733">
    <property type="protein sequence ID" value="ABS76941.1"/>
    <property type="molecule type" value="Genomic_DNA"/>
</dbReference>
<dbReference type="RefSeq" id="WP_011996883.1">
    <property type="nucleotide sequence ID" value="NC_009727.1"/>
</dbReference>
<dbReference type="SMR" id="A9KG69"/>
<dbReference type="KEGG" id="cbd:CBUD_1038"/>
<dbReference type="HOGENOM" id="CLU_114342_3_0_6"/>
<dbReference type="Proteomes" id="UP000008555">
    <property type="component" value="Chromosome"/>
</dbReference>
<dbReference type="GO" id="GO:0005886">
    <property type="term" value="C:plasma membrane"/>
    <property type="evidence" value="ECO:0007669"/>
    <property type="project" value="UniProtKB-SubCell"/>
</dbReference>
<dbReference type="GO" id="GO:0062054">
    <property type="term" value="F:fluoride channel activity"/>
    <property type="evidence" value="ECO:0007669"/>
    <property type="project" value="UniProtKB-UniRule"/>
</dbReference>
<dbReference type="GO" id="GO:0046872">
    <property type="term" value="F:metal ion binding"/>
    <property type="evidence" value="ECO:0007669"/>
    <property type="project" value="UniProtKB-KW"/>
</dbReference>
<dbReference type="GO" id="GO:0140114">
    <property type="term" value="P:cellular detoxification of fluoride"/>
    <property type="evidence" value="ECO:0007669"/>
    <property type="project" value="UniProtKB-UniRule"/>
</dbReference>
<dbReference type="HAMAP" id="MF_00454">
    <property type="entry name" value="FluC"/>
    <property type="match status" value="1"/>
</dbReference>
<dbReference type="InterPro" id="IPR003691">
    <property type="entry name" value="FluC"/>
</dbReference>
<dbReference type="NCBIfam" id="TIGR00494">
    <property type="entry name" value="crcB"/>
    <property type="match status" value="1"/>
</dbReference>
<dbReference type="PANTHER" id="PTHR28259">
    <property type="entry name" value="FLUORIDE EXPORT PROTEIN 1-RELATED"/>
    <property type="match status" value="1"/>
</dbReference>
<dbReference type="PANTHER" id="PTHR28259:SF1">
    <property type="entry name" value="FLUORIDE EXPORT PROTEIN 1-RELATED"/>
    <property type="match status" value="1"/>
</dbReference>
<dbReference type="Pfam" id="PF02537">
    <property type="entry name" value="CRCB"/>
    <property type="match status" value="1"/>
</dbReference>
<protein>
    <recommendedName>
        <fullName evidence="1">Fluoride-specific ion channel FluC</fullName>
    </recommendedName>
</protein>
<evidence type="ECO:0000255" key="1">
    <source>
        <dbReference type="HAMAP-Rule" id="MF_00454"/>
    </source>
</evidence>
<proteinExistence type="inferred from homology"/>
<feature type="chain" id="PRO_1000081010" description="Fluoride-specific ion channel FluC">
    <location>
        <begin position="1"/>
        <end position="124"/>
    </location>
</feature>
<feature type="transmembrane region" description="Helical" evidence="1">
    <location>
        <begin position="3"/>
        <end position="23"/>
    </location>
</feature>
<feature type="transmembrane region" description="Helical" evidence="1">
    <location>
        <begin position="34"/>
        <end position="54"/>
    </location>
</feature>
<feature type="transmembrane region" description="Helical" evidence="1">
    <location>
        <begin position="68"/>
        <end position="88"/>
    </location>
</feature>
<feature type="transmembrane region" description="Helical" evidence="1">
    <location>
        <begin position="100"/>
        <end position="120"/>
    </location>
</feature>
<feature type="binding site" evidence="1">
    <location>
        <position position="75"/>
    </location>
    <ligand>
        <name>Na(+)</name>
        <dbReference type="ChEBI" id="CHEBI:29101"/>
        <note>structural</note>
    </ligand>
</feature>
<feature type="binding site" evidence="1">
    <location>
        <position position="78"/>
    </location>
    <ligand>
        <name>Na(+)</name>
        <dbReference type="ChEBI" id="CHEBI:29101"/>
        <note>structural</note>
    </ligand>
</feature>
<comment type="function">
    <text evidence="1">Fluoride-specific ion channel. Important for reducing fluoride concentration in the cell, thus reducing its toxicity.</text>
</comment>
<comment type="catalytic activity">
    <reaction evidence="1">
        <text>fluoride(in) = fluoride(out)</text>
        <dbReference type="Rhea" id="RHEA:76159"/>
        <dbReference type="ChEBI" id="CHEBI:17051"/>
    </reaction>
    <physiologicalReaction direction="left-to-right" evidence="1">
        <dbReference type="Rhea" id="RHEA:76160"/>
    </physiologicalReaction>
</comment>
<comment type="activity regulation">
    <text evidence="1">Na(+) is not transported, but it plays an essential structural role and its presence is essential for fluoride channel function.</text>
</comment>
<comment type="subcellular location">
    <subcellularLocation>
        <location evidence="1">Cell inner membrane</location>
        <topology evidence="1">Multi-pass membrane protein</topology>
    </subcellularLocation>
</comment>
<comment type="similarity">
    <text evidence="1">Belongs to the fluoride channel Fluc/FEX (TC 1.A.43) family.</text>
</comment>